<protein>
    <recommendedName>
        <fullName>NAD(P)H-quinone oxidoreductase subunit 5, chloroplastic</fullName>
        <ecNumber>7.1.1.-</ecNumber>
    </recommendedName>
    <alternativeName>
        <fullName>NAD(P)H dehydrogenase subunit 5</fullName>
    </alternativeName>
    <alternativeName>
        <fullName>NADH-plastoquinone oxidoreductase subunit 5</fullName>
    </alternativeName>
</protein>
<name>NU5C_TOBAC</name>
<organism>
    <name type="scientific">Nicotiana tabacum</name>
    <name type="common">Common tobacco</name>
    <dbReference type="NCBI Taxonomy" id="4097"/>
    <lineage>
        <taxon>Eukaryota</taxon>
        <taxon>Viridiplantae</taxon>
        <taxon>Streptophyta</taxon>
        <taxon>Embryophyta</taxon>
        <taxon>Tracheophyta</taxon>
        <taxon>Spermatophyta</taxon>
        <taxon>Magnoliopsida</taxon>
        <taxon>eudicotyledons</taxon>
        <taxon>Gunneridae</taxon>
        <taxon>Pentapetalae</taxon>
        <taxon>asterids</taxon>
        <taxon>lamiids</taxon>
        <taxon>Solanales</taxon>
        <taxon>Solanaceae</taxon>
        <taxon>Nicotianoideae</taxon>
        <taxon>Nicotianeae</taxon>
        <taxon>Nicotiana</taxon>
    </lineage>
</organism>
<keyword id="KW-0150">Chloroplast</keyword>
<keyword id="KW-0472">Membrane</keyword>
<keyword id="KW-0520">NAD</keyword>
<keyword id="KW-0521">NADP</keyword>
<keyword id="KW-0934">Plastid</keyword>
<keyword id="KW-0618">Plastoquinone</keyword>
<keyword id="KW-0874">Quinone</keyword>
<keyword id="KW-1185">Reference proteome</keyword>
<keyword id="KW-0793">Thylakoid</keyword>
<keyword id="KW-1278">Translocase</keyword>
<keyword id="KW-0812">Transmembrane</keyword>
<keyword id="KW-1133">Transmembrane helix</keyword>
<keyword id="KW-0813">Transport</keyword>
<comment type="function">
    <text evidence="1">NDH shuttles electrons from NAD(P)H:plastoquinone, via FMN and iron-sulfur (Fe-S) centers, to quinones in the photosynthetic chain and possibly in a chloroplast respiratory chain. The immediate electron acceptor for the enzyme in this species is believed to be plastoquinone. Couples the redox reaction to proton translocation, and thus conserves the redox energy in a proton gradient (By similarity).</text>
</comment>
<comment type="catalytic activity">
    <reaction>
        <text>a plastoquinone + NADH + (n+1) H(+)(in) = a plastoquinol + NAD(+) + n H(+)(out)</text>
        <dbReference type="Rhea" id="RHEA:42608"/>
        <dbReference type="Rhea" id="RHEA-COMP:9561"/>
        <dbReference type="Rhea" id="RHEA-COMP:9562"/>
        <dbReference type="ChEBI" id="CHEBI:15378"/>
        <dbReference type="ChEBI" id="CHEBI:17757"/>
        <dbReference type="ChEBI" id="CHEBI:57540"/>
        <dbReference type="ChEBI" id="CHEBI:57945"/>
        <dbReference type="ChEBI" id="CHEBI:62192"/>
    </reaction>
</comment>
<comment type="catalytic activity">
    <reaction>
        <text>a plastoquinone + NADPH + (n+1) H(+)(in) = a plastoquinol + NADP(+) + n H(+)(out)</text>
        <dbReference type="Rhea" id="RHEA:42612"/>
        <dbReference type="Rhea" id="RHEA-COMP:9561"/>
        <dbReference type="Rhea" id="RHEA-COMP:9562"/>
        <dbReference type="ChEBI" id="CHEBI:15378"/>
        <dbReference type="ChEBI" id="CHEBI:17757"/>
        <dbReference type="ChEBI" id="CHEBI:57783"/>
        <dbReference type="ChEBI" id="CHEBI:58349"/>
        <dbReference type="ChEBI" id="CHEBI:62192"/>
    </reaction>
</comment>
<comment type="subunit">
    <text evidence="1">NDH is composed of at least 16 different subunits, 5 of which are encoded in the nucleus.</text>
</comment>
<comment type="subcellular location">
    <subcellularLocation>
        <location evidence="1">Plastid</location>
        <location evidence="1">Chloroplast thylakoid membrane</location>
        <topology evidence="1">Multi-pass membrane protein</topology>
    </subcellularLocation>
</comment>
<comment type="similarity">
    <text evidence="3">Belongs to the complex I subunit 5 family.</text>
</comment>
<dbReference type="EC" id="7.1.1.-"/>
<dbReference type="EMBL" id="L14953">
    <property type="protein sequence ID" value="AAA84685.1"/>
    <property type="molecule type" value="Genomic_DNA"/>
</dbReference>
<dbReference type="EMBL" id="Z00044">
    <property type="protein sequence ID" value="CAA77430.1"/>
    <property type="molecule type" value="Genomic_DNA"/>
</dbReference>
<dbReference type="PIR" id="S37352">
    <property type="entry name" value="DENTN5"/>
</dbReference>
<dbReference type="RefSeq" id="NP_054554.1">
    <property type="nucleotide sequence ID" value="NC_001879.2"/>
</dbReference>
<dbReference type="SMR" id="P06265"/>
<dbReference type="GeneID" id="800484"/>
<dbReference type="KEGG" id="nta:800484"/>
<dbReference type="OMA" id="WEKLINF"/>
<dbReference type="OrthoDB" id="543408at2759"/>
<dbReference type="Proteomes" id="UP000084051">
    <property type="component" value="Unplaced"/>
</dbReference>
<dbReference type="GO" id="GO:0009535">
    <property type="term" value="C:chloroplast thylakoid membrane"/>
    <property type="evidence" value="ECO:0007669"/>
    <property type="project" value="UniProtKB-SubCell"/>
</dbReference>
<dbReference type="GO" id="GO:0008137">
    <property type="term" value="F:NADH dehydrogenase (ubiquinone) activity"/>
    <property type="evidence" value="ECO:0007669"/>
    <property type="project" value="InterPro"/>
</dbReference>
<dbReference type="GO" id="GO:0048038">
    <property type="term" value="F:quinone binding"/>
    <property type="evidence" value="ECO:0007669"/>
    <property type="project" value="UniProtKB-KW"/>
</dbReference>
<dbReference type="GO" id="GO:0042773">
    <property type="term" value="P:ATP synthesis coupled electron transport"/>
    <property type="evidence" value="ECO:0007669"/>
    <property type="project" value="InterPro"/>
</dbReference>
<dbReference type="Gene3D" id="1.20.5.2700">
    <property type="match status" value="1"/>
</dbReference>
<dbReference type="InterPro" id="IPR002128">
    <property type="entry name" value="NADH_UbQ_OxRdtase_chlpt_su5_C"/>
</dbReference>
<dbReference type="InterPro" id="IPR018393">
    <property type="entry name" value="NADHpl_OxRdtase_5_subgr"/>
</dbReference>
<dbReference type="InterPro" id="IPR001750">
    <property type="entry name" value="ND/Mrp_TM"/>
</dbReference>
<dbReference type="InterPro" id="IPR003945">
    <property type="entry name" value="NU5C-like"/>
</dbReference>
<dbReference type="InterPro" id="IPR001516">
    <property type="entry name" value="Proton_antipo_N"/>
</dbReference>
<dbReference type="NCBIfam" id="TIGR01974">
    <property type="entry name" value="NDH_I_L"/>
    <property type="match status" value="1"/>
</dbReference>
<dbReference type="NCBIfam" id="NF005141">
    <property type="entry name" value="PRK06590.1"/>
    <property type="match status" value="1"/>
</dbReference>
<dbReference type="PANTHER" id="PTHR42829">
    <property type="entry name" value="NADH-UBIQUINONE OXIDOREDUCTASE CHAIN 5"/>
    <property type="match status" value="1"/>
</dbReference>
<dbReference type="PANTHER" id="PTHR42829:SF2">
    <property type="entry name" value="NADH-UBIQUINONE OXIDOREDUCTASE CHAIN 5"/>
    <property type="match status" value="1"/>
</dbReference>
<dbReference type="Pfam" id="PF01010">
    <property type="entry name" value="Proton_antipo_C"/>
    <property type="match status" value="1"/>
</dbReference>
<dbReference type="Pfam" id="PF00361">
    <property type="entry name" value="Proton_antipo_M"/>
    <property type="match status" value="1"/>
</dbReference>
<dbReference type="Pfam" id="PF00662">
    <property type="entry name" value="Proton_antipo_N"/>
    <property type="match status" value="1"/>
</dbReference>
<dbReference type="PRINTS" id="PR01434">
    <property type="entry name" value="NADHDHGNASE5"/>
</dbReference>
<dbReference type="PRINTS" id="PR01435">
    <property type="entry name" value="NPOXDRDTASE5"/>
</dbReference>
<reference key="1">
    <citation type="journal article" date="1986" name="EMBO J.">
        <title>The complete nucleotide sequence of the tobacco chloroplast genome: its gene organization and expression.</title>
        <authorList>
            <person name="Shinozaki K."/>
            <person name="Ohme M."/>
            <person name="Tanaka M."/>
            <person name="Wakasugi T."/>
            <person name="Hayashida N."/>
            <person name="Matsubayashi T."/>
            <person name="Zaita N."/>
            <person name="Chunwongse J."/>
            <person name="Obokata J."/>
            <person name="Yamaguchi-Shinozaki K."/>
            <person name="Ohto C."/>
            <person name="Torazawa K."/>
            <person name="Meng B.-Y."/>
            <person name="Sugita M."/>
            <person name="Deno H."/>
            <person name="Kamogashira T."/>
            <person name="Yamada K."/>
            <person name="Kusuda J."/>
            <person name="Takaiwa F."/>
            <person name="Kato A."/>
            <person name="Tohdoh N."/>
            <person name="Shimada H."/>
            <person name="Sugiura M."/>
        </authorList>
    </citation>
    <scope>NUCLEOTIDE SEQUENCE [LARGE SCALE GENOMIC DNA]</scope>
    <source>
        <strain>cv. Bright Yellow 4</strain>
    </source>
</reference>
<reference key="2">
    <citation type="journal article" date="1993" name="Plant Mol. Biol.">
        <title>Ninety extra nucleotide in ndhF gene of tobacco chloroplast DNA: a summary of revisions to the 1986 genome sequence.</title>
        <authorList>
            <person name="Olmstead R.G."/>
            <person name="Sweere J.A."/>
            <person name="Wolfe K.H."/>
        </authorList>
    </citation>
    <scope>SEQUENCE REVISION</scope>
</reference>
<gene>
    <name type="primary">ndhF</name>
    <name type="synonym">ndh5</name>
</gene>
<sequence>MEQTYEYAWIIPFIPLPVPMLIGAGLFLFPTATKSFRRMWAFQSVLLLSIVMVFSIYLSIQQINSSSFYQYVWSWIINNDFSLDFGYLIDPLTSIMSILITTVGIMVLIYSDNYMAHDQGYLRFFAYMSFFSTSMLGLVTSSNLIQIYIFWELVGLCSYLLIGFWFTRPVAANACQKAFVTNRVGDFGLLLGILGFYWITGSFEFRDLFEIFNNLIYNNEVDFLFVTLCAVLLFAGAVAKSAQFPLHVWLPDAMEGPTPISALIHAATMVAAGIFLVARLLPLFRVIPYIMYLISVIGIITVLLGATLALAQKDIKRGLAYSTMSQLGYMMLALGMGSYRSALFHLITHAYSKALLFLGSGSIIHSMETIVGYSPAKSQNMGLMGGLRKHVPISKITFLLGTLSLCGIPPLACFWSKDEILNDSWLYSPIFAIIAWATAGLTAFYMFRIYLLTFEGHLNAHFPNYGGKQKTPFYSISLWGKNGVKKNSCLLTMNNNESTYFFAKTKYPIDKNGRKMTRPFMTIAHFEHKAVYSYPYESDNTMLFPIFVLGLFTLFVGSIGIPFNQEGGNLDILSKWLAPSINLLHQKSNNSMDWNEFLKDAVLSVSIAYFGIFIASFLYKPIYSSLKNFELINSFVKKGPKRILWDKIINGIYDWSYNRAYIDAFYTRFLVGGIRGLAEFTHFFDRRVIDGMTNGVGVISFIVGEGIKYIGGGRISSYLFLYLAYVSIFLLVYYLLFSTL</sequence>
<feature type="chain" id="PRO_0000118206" description="NAD(P)H-quinone oxidoreductase subunit 5, chloroplastic">
    <location>
        <begin position="1"/>
        <end position="740"/>
    </location>
</feature>
<feature type="transmembrane region" description="Helical" evidence="2">
    <location>
        <begin position="9"/>
        <end position="29"/>
    </location>
</feature>
<feature type="transmembrane region" description="Helical" evidence="2">
    <location>
        <begin position="40"/>
        <end position="60"/>
    </location>
</feature>
<feature type="transmembrane region" description="Helical" evidence="2">
    <location>
        <begin position="89"/>
        <end position="109"/>
    </location>
</feature>
<feature type="transmembrane region" description="Helical" evidence="2">
    <location>
        <begin position="125"/>
        <end position="145"/>
    </location>
</feature>
<feature type="transmembrane region" description="Helical" evidence="2">
    <location>
        <begin position="147"/>
        <end position="167"/>
    </location>
</feature>
<feature type="transmembrane region" description="Helical" evidence="2">
    <location>
        <begin position="185"/>
        <end position="205"/>
    </location>
</feature>
<feature type="transmembrane region" description="Helical" evidence="2">
    <location>
        <begin position="219"/>
        <end position="239"/>
    </location>
</feature>
<feature type="transmembrane region" description="Helical" evidence="2">
    <location>
        <begin position="258"/>
        <end position="278"/>
    </location>
</feature>
<feature type="transmembrane region" description="Helical" evidence="2">
    <location>
        <begin position="286"/>
        <end position="306"/>
    </location>
</feature>
<feature type="transmembrane region" description="Helical" evidence="2">
    <location>
        <begin position="327"/>
        <end position="347"/>
    </location>
</feature>
<feature type="transmembrane region" description="Helical" evidence="2">
    <location>
        <begin position="354"/>
        <end position="374"/>
    </location>
</feature>
<feature type="transmembrane region" description="Helical" evidence="2">
    <location>
        <begin position="396"/>
        <end position="416"/>
    </location>
</feature>
<feature type="transmembrane region" description="Helical" evidence="2">
    <location>
        <begin position="425"/>
        <end position="445"/>
    </location>
</feature>
<feature type="transmembrane region" description="Helical" evidence="2">
    <location>
        <begin position="543"/>
        <end position="563"/>
    </location>
</feature>
<feature type="transmembrane region" description="Helical" evidence="2">
    <location>
        <begin position="602"/>
        <end position="622"/>
    </location>
</feature>
<feature type="transmembrane region" description="Helical" evidence="2">
    <location>
        <begin position="717"/>
        <end position="737"/>
    </location>
</feature>
<accession>P06265</accession>
<evidence type="ECO:0000250" key="1"/>
<evidence type="ECO:0000255" key="2"/>
<evidence type="ECO:0000305" key="3"/>
<proteinExistence type="inferred from homology"/>
<geneLocation type="chloroplast"/>